<organismHost>
    <name type="scientific">Triticum aestivum</name>
    <name type="common">Wheat</name>
    <dbReference type="NCBI Taxonomy" id="4565"/>
</organismHost>
<reference key="1">
    <citation type="journal article" date="2009" name="Arch. Virol.">
        <title>The complete genome sequence of Triticum mosaic virus, a new wheat-infecting virus of the High Plains.</title>
        <authorList>
            <person name="Fellers J.P."/>
            <person name="Seifers D."/>
            <person name="Ryba-White M."/>
            <person name="Martin T.J."/>
        </authorList>
    </citation>
    <scope>NUCLEOTIDE SEQUENCE [GENOMIC RNA]</scope>
</reference>
<reference key="2">
    <citation type="journal article" date="2008" name="Plant Dis.">
        <title>Triticum mosaic virus: A new virus isolated from wheat in Kansas.</title>
        <authorList>
            <person name="Seifers D.L."/>
            <person name="Martin T.J."/>
            <person name="Harvey T.L."/>
            <person name="Fellers J.P."/>
            <person name="Stack J.P."/>
            <person name="Ryba-White M."/>
            <person name="Haber S."/>
            <person name="Krokhin O.V."/>
            <person name="Spicer V."/>
            <person name="Lovat N."/>
            <person name="Yamchuk A."/>
            <person name="Standing K.G."/>
        </authorList>
    </citation>
    <scope>PROTEIN SEQUENCE OF 2819-2918; 2953-2968; 2988-3000; 3005-3012 AND 3016-3112</scope>
</reference>
<feature type="chain" id="PRO_0000420027" description="Genome polyprotein">
    <location>
        <begin position="1"/>
        <end position="3112"/>
    </location>
</feature>
<feature type="chain" id="PRO_0000395486" description="P1 proteinase" evidence="6">
    <location>
        <begin position="1"/>
        <end position="383"/>
    </location>
</feature>
<feature type="chain" id="PRO_0000395487" description="Helper component proteinase" evidence="6">
    <location>
        <begin position="384"/>
        <end position="850"/>
    </location>
</feature>
<feature type="chain" id="PRO_0000395488" description="Protein P3" evidence="1">
    <location>
        <begin position="851"/>
        <end position="1148"/>
    </location>
</feature>
<feature type="chain" id="PRO_0000395489" description="6 kDa protein 1" evidence="1">
    <location>
        <begin position="1149"/>
        <end position="1204"/>
    </location>
</feature>
<feature type="chain" id="PRO_0000395490" description="Cytoplasmic inclusion protein" evidence="1">
    <location>
        <begin position="1205"/>
        <end position="1852"/>
    </location>
</feature>
<feature type="chain" id="PRO_0000395491" description="6 kDa protein 2" evidence="1">
    <location>
        <begin position="1853"/>
        <end position="1902"/>
    </location>
</feature>
<feature type="chain" id="PRO_0000395492" description="Viral genome-linked protein" evidence="1">
    <location>
        <begin position="1903"/>
        <end position="2095"/>
    </location>
</feature>
<feature type="chain" id="PRO_0000395493" description="Nuclear inclusion protein A" evidence="1">
    <location>
        <begin position="2096"/>
        <end position="2328"/>
    </location>
</feature>
<feature type="chain" id="PRO_0000395494" description="Nuclear inclusion protein B" evidence="1">
    <location>
        <begin position="2329"/>
        <end position="2818"/>
    </location>
</feature>
<feature type="chain" id="PRO_0000288836" description="Capsid protein" evidence="1">
    <location>
        <begin position="2819"/>
        <end position="3112"/>
    </location>
</feature>
<feature type="domain" description="Peptidase S30" evidence="12">
    <location>
        <begin position="234"/>
        <end position="383"/>
    </location>
</feature>
<feature type="domain" description="Peptidase C6" evidence="11">
    <location>
        <begin position="729"/>
        <end position="850"/>
    </location>
</feature>
<feature type="domain" description="Helicase ATP-binding" evidence="8">
    <location>
        <begin position="1278"/>
        <end position="1429"/>
    </location>
</feature>
<feature type="domain" description="Helicase C-terminal" evidence="9">
    <location>
        <begin position="1444"/>
        <end position="1627"/>
    </location>
</feature>
<feature type="domain" description="Peptidase C4" evidence="10">
    <location>
        <begin position="2096"/>
        <end position="2311"/>
    </location>
</feature>
<feature type="domain" description="RdRp catalytic" evidence="7">
    <location>
        <begin position="2569"/>
        <end position="2687"/>
    </location>
</feature>
<feature type="region of interest" description="Disordered" evidence="13">
    <location>
        <begin position="2818"/>
        <end position="2867"/>
    </location>
</feature>
<feature type="short sequence motif" description="DECH box">
    <location>
        <begin position="1379"/>
        <end position="1382"/>
    </location>
</feature>
<feature type="compositionally biased region" description="Basic and acidic residues" evidence="13">
    <location>
        <begin position="2830"/>
        <end position="2844"/>
    </location>
</feature>
<feature type="compositionally biased region" description="Polar residues" evidence="13">
    <location>
        <begin position="2845"/>
        <end position="2867"/>
    </location>
</feature>
<feature type="active site" description="For P1 proteinase activity" evidence="12">
    <location>
        <position position="286"/>
    </location>
</feature>
<feature type="active site" description="For P1 proteinase activity" evidence="12">
    <location>
        <position position="301"/>
    </location>
</feature>
<feature type="active site" description="For P1 proteinase activity" evidence="12">
    <location>
        <position position="333"/>
    </location>
</feature>
<feature type="active site" description="For helper component proteinase activity" evidence="11">
    <location>
        <position position="737"/>
    </location>
</feature>
<feature type="active site" description="For helper component proteinase activity" evidence="11">
    <location>
        <position position="809"/>
    </location>
</feature>
<feature type="active site" description="For nuclear inclusion protein A activity" evidence="10">
    <location>
        <position position="2140"/>
    </location>
</feature>
<feature type="active site" description="For nuclear inclusion protein A activity" evidence="10">
    <location>
        <position position="2174"/>
    </location>
</feature>
<feature type="active site" description="For nuclear inclusion protein A activity" evidence="10">
    <location>
        <position position="2243"/>
    </location>
</feature>
<feature type="binding site" evidence="8">
    <location>
        <begin position="1291"/>
        <end position="1298"/>
    </location>
    <ligand>
        <name>ATP</name>
        <dbReference type="ChEBI" id="CHEBI:30616"/>
    </ligand>
</feature>
<feature type="site" description="Cleavage; by P1 proteinase" evidence="12">
    <location>
        <begin position="383"/>
        <end position="384"/>
    </location>
</feature>
<feature type="site" description="Cleavage; by autolysis" evidence="11">
    <location>
        <begin position="850"/>
        <end position="851"/>
    </location>
</feature>
<feature type="site" description="Cleavage; by NIa-pro" evidence="1">
    <location>
        <begin position="1148"/>
        <end position="1149"/>
    </location>
</feature>
<feature type="site" description="Cleavage; by NIa-pro" evidence="1">
    <location>
        <begin position="1204"/>
        <end position="1205"/>
    </location>
</feature>
<feature type="site" description="Cleavage; by NIa-pro" evidence="1">
    <location>
        <begin position="1852"/>
        <end position="1853"/>
    </location>
</feature>
<feature type="site" description="Cleavage; by NIa-pro" evidence="1">
    <location>
        <begin position="1902"/>
        <end position="1903"/>
    </location>
</feature>
<feature type="site" description="Cleavage; by NIa-pro" evidence="1">
    <location>
        <begin position="2095"/>
        <end position="2096"/>
    </location>
</feature>
<feature type="site" description="Cleavage; by NIa-pro" evidence="1">
    <location>
        <begin position="2328"/>
        <end position="2329"/>
    </location>
</feature>
<feature type="site" description="Cleavage; by NIa-pro" evidence="1">
    <location>
        <begin position="2818"/>
        <end position="2819"/>
    </location>
</feature>
<feature type="sequence conflict" description="In Ref. 2; AA sequence." evidence="14" ref="2">
    <original>S</original>
    <variation>E</variation>
    <location>
        <position position="2819"/>
    </location>
</feature>
<accession>A4KZ49</accession>
<comment type="function">
    <molecule>Helper component proteinase</molecule>
    <text evidence="2">Required for aphid transmission and also has proteolytic activity. Only cleaves a Gly-Gly dipeptide at its own C-terminus. Interacts with virions and aphid stylets. Acts as a suppressor of RNA-mediated gene silencing, also known as post-transcriptional gene silencing (PTGS), a mechanism of plant viral defense that limits the accumulation of viral RNAs. May have RNA-binding activity.</text>
</comment>
<comment type="function">
    <molecule>Cytoplasmic inclusion protein</molecule>
    <text>Has helicase activity. It may be involved in replication.</text>
</comment>
<comment type="function">
    <molecule>6 kDa protein 1</molecule>
    <text evidence="4">Indispensable for virus replication.</text>
</comment>
<comment type="function">
    <molecule>6 kDa protein 2</molecule>
    <text evidence="3">Indispensable for virus replication.</text>
</comment>
<comment type="function">
    <molecule>Viral genome-linked protein</molecule>
    <text evidence="5">Mediates the cap-independent, EIF4E-dependent translation of viral genomic RNAs (By similarity). Binds to the cap-binding site of host EIF4E and thus interferes with the host EIF4E-dependent mRNA export and translation (By similarity). VPg-RNA directly binds EIF4E and is a template for transcription (By similarity). Also forms trimeric complexes with EIF4E-EIF4G, which are templates for translation (By similarity).</text>
</comment>
<comment type="function">
    <molecule>Nuclear inclusion protein A</molecule>
    <text evidence="2">Has RNA-binding and proteolytic activities.</text>
</comment>
<comment type="function">
    <molecule>Nuclear inclusion protein B</molecule>
    <text>An RNA-dependent RNA polymerase that plays an essential role in the virus replication.</text>
</comment>
<comment type="function">
    <molecule>Capsid protein</molecule>
    <text evidence="2">Involved in aphid transmission, cell-to-cell and systemis movement, encapsidation of the viral RNA and in the regulation of viral RNA amplification.</text>
</comment>
<comment type="catalytic activity">
    <reaction evidence="7">
        <text>RNA(n) + a ribonucleoside 5'-triphosphate = RNA(n+1) + diphosphate</text>
        <dbReference type="Rhea" id="RHEA:21248"/>
        <dbReference type="Rhea" id="RHEA-COMP:14527"/>
        <dbReference type="Rhea" id="RHEA-COMP:17342"/>
        <dbReference type="ChEBI" id="CHEBI:33019"/>
        <dbReference type="ChEBI" id="CHEBI:61557"/>
        <dbReference type="ChEBI" id="CHEBI:140395"/>
        <dbReference type="EC" id="2.7.7.48"/>
    </reaction>
</comment>
<comment type="catalytic activity">
    <reaction evidence="2">
        <text>Hydrolyzes glutaminyl bonds, and activity is further restricted by preferences for the amino acids in P6 - P1' that vary with the species of potyvirus, e.g. Glu-Xaa-Xaa-Tyr-Xaa-Gln-|-(Ser or Gly) for the enzyme from tobacco etch virus. The natural substrate is the viral polyprotein, but other proteins and oligopeptides containing the appropriate consensus sequence are also cleaved.</text>
        <dbReference type="EC" id="3.4.22.44"/>
    </reaction>
</comment>
<comment type="catalytic activity">
    <reaction evidence="2">
        <text>Hydrolyzes a Gly-|-Gly bond at its own C-terminus, commonly in the sequence -Tyr-Xaa-Val-Gly-|-Gly, in the processing of the potyviral polyprotein.</text>
        <dbReference type="EC" id="3.4.22.45"/>
    </reaction>
</comment>
<comment type="subcellular location">
    <molecule>6 kDa protein 1</molecule>
    <subcellularLocation>
        <location>Host cytoplasmic vesicle</location>
    </subcellularLocation>
    <text evidence="4">Probably colocalizes with 6K2-induced vesicles associated with host chloroplasts.</text>
</comment>
<comment type="subcellular location">
    <molecule>6 kDa protein 2</molecule>
    <subcellularLocation>
        <location evidence="3">Host cytoplasmic vesicle</location>
    </subcellularLocation>
    <text evidence="3">6K-induced vesicles associate with host chloroplasts.</text>
</comment>
<comment type="subcellular location">
    <molecule>Capsid protein</molecule>
    <subcellularLocation>
        <location evidence="14">Virion</location>
    </subcellularLocation>
</comment>
<comment type="domain">
    <molecule>Helper component proteinase</molecule>
    <text>The N-terminus is involved in interaction with stylets. The central part is involved in interaction with virions and the C-terminus is involved in cell-to cell movement of the virus.</text>
</comment>
<comment type="PTM">
    <molecule>Viral genome-linked protein</molecule>
    <text evidence="3">VPg is uridylylated by the polymerase and is covalently attached to the 5'-end of the genomic RNA. This uridylylated form acts as a nucleotide-peptide primer for the polymerase (By similarity).</text>
</comment>
<comment type="PTM">
    <molecule>Genome polyprotein</molecule>
    <text evidence="1">Genome polyprotein of potyviruses undergoes post-translational proteolytic processing by the main proteinase NIa-pro resulting in the production of at least ten individual proteins. The P1 proteinase and the HC-pro cleave only their respective C-termini autocatalytically. 6K1 is essential for proper proteolytic separation of P3 from CI (By similarity).</text>
</comment>
<comment type="similarity">
    <text evidence="14">Belongs to the potyviridae genome polyprotein family.</text>
</comment>
<sequence>MSSKKMMWVPKSAHKAPVVSREPVIRKKEWVARQIPKYIPVSNPSDCRDEISQTLLHFDSEEAVYDFVWRFPMGSIFWDTNGRIKPVVNCLLRATRMNLDYDVAADVYVCRDCLSCASSYMYFSNYHYDCRELRENHEAVVSCKYEQHIVSTFDVFPRYCTQEIEQNVVNWMTETLERYDNEPLRIEKQLQFYNHKTEQMESRVQEVQVTTAEYAVSDTYVPQQLSRKGSVSAKLTQRRANKIIMRTHEVENLIRETIDLCDERQIPITFVDVKHKRCLPRIPLRHMQAKPDISEIVEQGDMYNEVGQFIEQYQNLAEPFRVIRDYEVTRGWSGVILHRDDLALDPQTQARCLNNLFVVMGRCEHGHLQNALRPDCLEGLTYYSDTFGKVFNESLVKHHPGKHQFRIGSRTDYEWEELAMWVNAVCPVSFRCADCRPPQSLNEYIENIRMSKAMAELAGRQDALSKTLHKWTTMLISSVLTTEIRARDNLEPIQERIFTRNMPLGPLYDVAGAMNRAVIDIQTAVQNMQLSIGNSNMNEQQRNQTLLNEINKIKQHSFMQTKEMLSRFENIAQTYQNIISSASQPLSIHSMRQLMMDSRMDESFEFDIMRKKGSIASIAPMAFRTFEDIYSQPGVYNQKWLNLTPSGRFQTDIDYLRLDLPIDVIQKKKHVVNRNEIKEETCYVIVGQVNVSFCEVVARCFVPIPHVLRVGSPQNPTMIKIQDQEGGKTLVPKSGFCYVLQLVLMLGYVPDQLTAAFVKDVGIVVESLGPWPLFVDYLGAIKNLIIRYPTTIKAPTALHIVDHVDTVIHVMTTLGCVNKGEHYLTLQSVAQLHDAAMTVNIETFKDYRIGGVVPQLKHMLQSEEHMLEVLEAKPQWLVHLLLSPTQIWALSQSVVKYQVIHKVMTSNPDLAVALAQLVAISSNFSIFKNTEHVIQKYFEVSKQLQNVSGVILGEHNEYFETAFAQYSALRFSTDVVLLMDQFSTRKKTLDDLEDYYRKTIPSILIECGLLGPSDFGWRKRLVRGVVDRGSGLKSTVKSLGSFSTKEKWISWSGLGSGTITCVKFPFVCLQRSGSWLYSSTKTTAFNAVWMAGIKCVKSNVRSILLDSALYGAITLALLCAIKLIRKAFRFVEGLIKEDTSDDEDYVLHAKAASDSLYIQCLAWLALVVGCFNSGLANDIYFSTTKYRTLLDMVKTAHSDSFVFHAGDEEEGEIVELITRDNFVDYVYNHSDPLMEFDSETLLGWYTRISYQGRVLEHPLRVGTNCHLTRENVDEIAKNIATGAGNEFIVVGDVGSGKSTKLPIAVSTYGPVLILVPSRELVNNLCSSIWHVGKKQASTYMMNCITRGTSNISIMTYGYALALFSHCPIELQKYRFIQMDECHEFSSHMITFYSWWRESGKFTKLFKTTATPPGTVIKGGCVPTNHKVDVIEIRDVSVEEFCRRSIDSHAEGLRSLMPNGGRVIMFVPSRRECELARSSLISIPGARTWVVYRAAATQATKLVAELADDKHYFQIIITTTVLQNGVNLDPDCVVDFGQTFEAAYDRDSRQLGVRRRNINPGELIQRVGRVGRNKPGKFIQVGKRLEHEVVPNSCCVTDAILMSFTLELAPFISSHLIDEVNFVTREQVRTAMKFSAPLLFMIHYVRRDGRMLNGYYQQLKGLLLQTSDVALCDTLVGDAETNSFLTLRQYQLRGIIEAQEVLPDLPIPFYSSEFALPFYLEIGQITKEAIRARSFTLRIKTPDVKKAVMRLSTSATQIDQTIGILRTRLQLTRERLSKFSELKATAHNLRLTPIFNTCFDMGAAKSESTLRASLTAGEELLSALELARTEKSDKALEKLILDNPVLGDCLVFHGGPEEYFDQTLFQTSTGLINKYTVGIACLTVGLGCTIWYYLKKREKYVMHGKVHTRETGLTTNHLFVPGMKEHIQEWTGGDHEIGNRFGEAYKRRFIGRQPTEEQKLSKEKWDKREGQQTSVYKTLYDLDPTKFKYVVVECPDFDLKKKLNRQEKKQLDTTIVEACRTRMLDKGQHDFKDVERATVYLFNDNGVGHKVQLTPHNPLAVSRTTTHPVGFPAEAGRLRQTGQAMEMTPEELEKALDDNYVPHSRCQIDISHLHRHLAIVNTGGMSTQCFITQTMCVAPYHLAMGFKDNTKLTIYCSNGVYVMPVPKVEKMENMDLVVFRMPQDFPPLKRCATIREPKSSDEVTLITGKRTTHGIQLQFSKVVSIDRKSDTVWKYMIDSVPGVCGGMVMCVEDGCVVGFHSAAAIRNKVSNGSIFTPVTPQLLDSLQSSEGHLFDWYFNDDLISWKGVPTNMDPRNFPVSETISEFIFHNDSKGHGTDKYYGENLTIEGRVLQSFNTRHVVKGLDDAFAEYVNKFGEPPADTFTHLPSDLSSDAFYKDFMKYSTPVEVGTVNIENFEKAVQAVVELLEQQGFEQGEFSPEMDFYKILNSFNLDTAMGALYQCKKKDVLPMASHEQLATWFWNSLENLATGKLGLWKASLKAELRPKEKVLEKKTRVFTAAPFDVSFGAKAFVDDFNNKFYATQAGSNWTVGINKFNCGWDELARRFNPDWKFIDADGSRYDSSLTPLLFNAVLRIRQHFLRANGFERRMLSNFYTQLVWTPISTITGQIVKKNKGGPSGQPSTVVDNTMMLMIAVEYAKLQYGVTDLKYVCNGDDLILNAPQGVCETIRANFSHSFKELGLTYEFEQEVDSIDQVEYMSHKWIDCGGVLIPKLKPERIVSVLQWNKSLDLASQANKINAAWIESFGYGDLSKFIREYANWWGERNGQVGFLCSEEKVASLYLTNDVTIHTEEHDEFVFHSGADQSGVVKDQTGDKAEGSGTKTEDPPNQTTDPVNNPSNGGNKDAPQNLNATVVTKSYTYIPPIMKSLVTIDTAKKMADYTPPDALISTQACTLEQFGRWANAAANGLGLSMQAFQTDVVPYWIYWCIVNSASDEHKKLSSWTKVNMTIDDATGQINLNEGEAQTIYEMSPMFDEAKPTLRAVMRHFGALAYRWVKFSIAKRKPIIPHNAIKAGLMDVTYFPCCIDFVTVDQLSPQEQNVRNQVINARVSDTPRALFKHAQRAGAGEEDTNLRRDDDANYGRTRVGGAMFGTR</sequence>
<dbReference type="EC" id="3.4.-.-" evidence="2"/>
<dbReference type="EC" id="3.4.22.45" evidence="2"/>
<dbReference type="EC" id="3.6.4.-"/>
<dbReference type="EC" id="3.4.22.44"/>
<dbReference type="EC" id="2.7.7.48"/>
<dbReference type="EMBL" id="FJ263671">
    <property type="protein sequence ID" value="ABO41208.2"/>
    <property type="molecule type" value="Genomic_RNA"/>
</dbReference>
<dbReference type="RefSeq" id="YP_002956073.1">
    <property type="nucleotide sequence ID" value="NC_012799.1"/>
</dbReference>
<dbReference type="GeneID" id="7984336"/>
<dbReference type="KEGG" id="vg:7984336"/>
<dbReference type="Proteomes" id="UP000008255">
    <property type="component" value="Segment"/>
</dbReference>
<dbReference type="GO" id="GO:0019029">
    <property type="term" value="C:helical viral capsid"/>
    <property type="evidence" value="ECO:0007669"/>
    <property type="project" value="UniProtKB-KW"/>
</dbReference>
<dbReference type="GO" id="GO:0044161">
    <property type="term" value="C:host cell cytoplasmic vesicle"/>
    <property type="evidence" value="ECO:0007669"/>
    <property type="project" value="UniProtKB-SubCell"/>
</dbReference>
<dbReference type="GO" id="GO:0005524">
    <property type="term" value="F:ATP binding"/>
    <property type="evidence" value="ECO:0007669"/>
    <property type="project" value="UniProtKB-KW"/>
</dbReference>
<dbReference type="GO" id="GO:0004197">
    <property type="term" value="F:cysteine-type endopeptidase activity"/>
    <property type="evidence" value="ECO:0007669"/>
    <property type="project" value="InterPro"/>
</dbReference>
<dbReference type="GO" id="GO:0004386">
    <property type="term" value="F:helicase activity"/>
    <property type="evidence" value="ECO:0007669"/>
    <property type="project" value="UniProtKB-KW"/>
</dbReference>
<dbReference type="GO" id="GO:0016818">
    <property type="term" value="F:hydrolase activity, acting on acid anhydrides, in phosphorus-containing anhydrides"/>
    <property type="evidence" value="ECO:0007669"/>
    <property type="project" value="InterPro"/>
</dbReference>
<dbReference type="GO" id="GO:0003723">
    <property type="term" value="F:RNA binding"/>
    <property type="evidence" value="ECO:0007669"/>
    <property type="project" value="InterPro"/>
</dbReference>
<dbReference type="GO" id="GO:0003968">
    <property type="term" value="F:RNA-directed RNA polymerase activity"/>
    <property type="evidence" value="ECO:0007669"/>
    <property type="project" value="UniProtKB-KW"/>
</dbReference>
<dbReference type="GO" id="GO:0008236">
    <property type="term" value="F:serine-type peptidase activity"/>
    <property type="evidence" value="ECO:0007669"/>
    <property type="project" value="UniProtKB-KW"/>
</dbReference>
<dbReference type="GO" id="GO:0005198">
    <property type="term" value="F:structural molecule activity"/>
    <property type="evidence" value="ECO:0007669"/>
    <property type="project" value="InterPro"/>
</dbReference>
<dbReference type="GO" id="GO:0006351">
    <property type="term" value="P:DNA-templated transcription"/>
    <property type="evidence" value="ECO:0007669"/>
    <property type="project" value="InterPro"/>
</dbReference>
<dbReference type="GO" id="GO:0006508">
    <property type="term" value="P:proteolysis"/>
    <property type="evidence" value="ECO:0007669"/>
    <property type="project" value="UniProtKB-KW"/>
</dbReference>
<dbReference type="GO" id="GO:0052170">
    <property type="term" value="P:symbiont-mediated suppression of host innate immune response"/>
    <property type="evidence" value="ECO:0007669"/>
    <property type="project" value="UniProtKB-KW"/>
</dbReference>
<dbReference type="GO" id="GO:0039694">
    <property type="term" value="P:viral RNA genome replication"/>
    <property type="evidence" value="ECO:0007669"/>
    <property type="project" value="InterPro"/>
</dbReference>
<dbReference type="CDD" id="cd23175">
    <property type="entry name" value="ps-ssRNAv_Potyviridae_RdRp"/>
    <property type="match status" value="1"/>
</dbReference>
<dbReference type="Gene3D" id="3.30.70.270">
    <property type="match status" value="1"/>
</dbReference>
<dbReference type="Gene3D" id="3.90.70.150">
    <property type="entry name" value="Helper component proteinase"/>
    <property type="match status" value="1"/>
</dbReference>
<dbReference type="Gene3D" id="3.40.50.300">
    <property type="entry name" value="P-loop containing nucleotide triphosphate hydrolases"/>
    <property type="match status" value="2"/>
</dbReference>
<dbReference type="Gene3D" id="2.40.10.10">
    <property type="entry name" value="Trypsin-like serine proteases"/>
    <property type="match status" value="2"/>
</dbReference>
<dbReference type="InterPro" id="IPR011545">
    <property type="entry name" value="DEAD/DEAH_box_helicase_dom"/>
</dbReference>
<dbReference type="InterPro" id="IPR043502">
    <property type="entry name" value="DNA/RNA_pol_sf"/>
</dbReference>
<dbReference type="InterPro" id="IPR001456">
    <property type="entry name" value="HC-pro"/>
</dbReference>
<dbReference type="InterPro" id="IPR031159">
    <property type="entry name" value="HC_PRO_CPD_dom"/>
</dbReference>
<dbReference type="InterPro" id="IPR042308">
    <property type="entry name" value="HC_PRO_CPD_sf"/>
</dbReference>
<dbReference type="InterPro" id="IPR014001">
    <property type="entry name" value="Helicase_ATP-bd"/>
</dbReference>
<dbReference type="InterPro" id="IPR001650">
    <property type="entry name" value="Helicase_C-like"/>
</dbReference>
<dbReference type="InterPro" id="IPR027417">
    <property type="entry name" value="P-loop_NTPase"/>
</dbReference>
<dbReference type="InterPro" id="IPR025910">
    <property type="entry name" value="P1_Ser_Pept_dom"/>
</dbReference>
<dbReference type="InterPro" id="IPR002540">
    <property type="entry name" value="Pept_S30_P1_potyvir"/>
</dbReference>
<dbReference type="InterPro" id="IPR009003">
    <property type="entry name" value="Peptidase_S1_PA"/>
</dbReference>
<dbReference type="InterPro" id="IPR043504">
    <property type="entry name" value="Peptidase_S1_PA_chymotrypsin"/>
</dbReference>
<dbReference type="InterPro" id="IPR001592">
    <property type="entry name" value="Poty_coat"/>
</dbReference>
<dbReference type="InterPro" id="IPR001730">
    <property type="entry name" value="Potyv_NIa-pro_dom"/>
</dbReference>
<dbReference type="InterPro" id="IPR013648">
    <property type="entry name" value="PP_Potyviridae"/>
</dbReference>
<dbReference type="InterPro" id="IPR043128">
    <property type="entry name" value="Rev_trsase/Diguanyl_cyclase"/>
</dbReference>
<dbReference type="InterPro" id="IPR001205">
    <property type="entry name" value="RNA-dir_pol_C"/>
</dbReference>
<dbReference type="InterPro" id="IPR007094">
    <property type="entry name" value="RNA-dir_pol_PSvirus"/>
</dbReference>
<dbReference type="Pfam" id="PF00270">
    <property type="entry name" value="DEAD"/>
    <property type="match status" value="1"/>
</dbReference>
<dbReference type="Pfam" id="PF00271">
    <property type="entry name" value="Helicase_C"/>
    <property type="match status" value="1"/>
</dbReference>
<dbReference type="Pfam" id="PF00863">
    <property type="entry name" value="Peptidase_C4"/>
    <property type="match status" value="1"/>
</dbReference>
<dbReference type="Pfam" id="PF00851">
    <property type="entry name" value="Peptidase_C6"/>
    <property type="match status" value="1"/>
</dbReference>
<dbReference type="Pfam" id="PF13611">
    <property type="entry name" value="Peptidase_S76"/>
    <property type="match status" value="1"/>
</dbReference>
<dbReference type="Pfam" id="PF00767">
    <property type="entry name" value="Poty_coat"/>
    <property type="match status" value="1"/>
</dbReference>
<dbReference type="Pfam" id="PF08440">
    <property type="entry name" value="Poty_PP"/>
    <property type="match status" value="1"/>
</dbReference>
<dbReference type="Pfam" id="PF00680">
    <property type="entry name" value="RdRP_1"/>
    <property type="match status" value="1"/>
</dbReference>
<dbReference type="PRINTS" id="PR00966">
    <property type="entry name" value="NIAPOTYPTASE"/>
</dbReference>
<dbReference type="SMART" id="SM00487">
    <property type="entry name" value="DEXDc"/>
    <property type="match status" value="1"/>
</dbReference>
<dbReference type="SMART" id="SM00490">
    <property type="entry name" value="HELICc"/>
    <property type="match status" value="1"/>
</dbReference>
<dbReference type="SUPFAM" id="SSF56672">
    <property type="entry name" value="DNA/RNA polymerases"/>
    <property type="match status" value="1"/>
</dbReference>
<dbReference type="SUPFAM" id="SSF52540">
    <property type="entry name" value="P-loop containing nucleoside triphosphate hydrolases"/>
    <property type="match status" value="1"/>
</dbReference>
<dbReference type="SUPFAM" id="SSF50494">
    <property type="entry name" value="Trypsin-like serine proteases"/>
    <property type="match status" value="1"/>
</dbReference>
<dbReference type="PROSITE" id="PS51744">
    <property type="entry name" value="HC_PRO_CPD"/>
    <property type="match status" value="1"/>
</dbReference>
<dbReference type="PROSITE" id="PS51192">
    <property type="entry name" value="HELICASE_ATP_BIND_1"/>
    <property type="match status" value="1"/>
</dbReference>
<dbReference type="PROSITE" id="PS51194">
    <property type="entry name" value="HELICASE_CTER"/>
    <property type="match status" value="1"/>
</dbReference>
<dbReference type="PROSITE" id="PS51436">
    <property type="entry name" value="POTYVIRUS_NIA_PRO"/>
    <property type="match status" value="1"/>
</dbReference>
<dbReference type="PROSITE" id="PS51871">
    <property type="entry name" value="PV_P1_PRO"/>
    <property type="match status" value="1"/>
</dbReference>
<dbReference type="PROSITE" id="PS50507">
    <property type="entry name" value="RDRP_SSRNA_POS"/>
    <property type="match status" value="1"/>
</dbReference>
<proteinExistence type="evidence at protein level"/>
<name>POLG_TRMVU</name>
<organism>
    <name type="scientific">Triticum mosaic virus (isolate Triticum aestivum/United States/U06-123/2006)</name>
    <name type="common">TriMV</name>
    <dbReference type="NCBI Taxonomy" id="1289472"/>
    <lineage>
        <taxon>Viruses</taxon>
        <taxon>Riboviria</taxon>
        <taxon>Orthornavirae</taxon>
        <taxon>Pisuviricota</taxon>
        <taxon>Stelpaviricetes</taxon>
        <taxon>Patatavirales</taxon>
        <taxon>Potyviridae</taxon>
        <taxon>Poacevirus</taxon>
        <taxon>Triticum mosaic virus</taxon>
    </lineage>
</organism>
<evidence type="ECO:0000250" key="1"/>
<evidence type="ECO:0000250" key="2">
    <source>
        <dbReference type="UniProtKB" id="P04517"/>
    </source>
</evidence>
<evidence type="ECO:0000250" key="3">
    <source>
        <dbReference type="UniProtKB" id="P09814"/>
    </source>
</evidence>
<evidence type="ECO:0000250" key="4">
    <source>
        <dbReference type="UniProtKB" id="P13529"/>
    </source>
</evidence>
<evidence type="ECO:0000250" key="5">
    <source>
        <dbReference type="UniProtKB" id="P18247"/>
    </source>
</evidence>
<evidence type="ECO:0000255" key="6"/>
<evidence type="ECO:0000255" key="7">
    <source>
        <dbReference type="PROSITE-ProRule" id="PRU00539"/>
    </source>
</evidence>
<evidence type="ECO:0000255" key="8">
    <source>
        <dbReference type="PROSITE-ProRule" id="PRU00541"/>
    </source>
</evidence>
<evidence type="ECO:0000255" key="9">
    <source>
        <dbReference type="PROSITE-ProRule" id="PRU00542"/>
    </source>
</evidence>
<evidence type="ECO:0000255" key="10">
    <source>
        <dbReference type="PROSITE-ProRule" id="PRU00766"/>
    </source>
</evidence>
<evidence type="ECO:0000255" key="11">
    <source>
        <dbReference type="PROSITE-ProRule" id="PRU01080"/>
    </source>
</evidence>
<evidence type="ECO:0000255" key="12">
    <source>
        <dbReference type="PROSITE-ProRule" id="PRU01219"/>
    </source>
</evidence>
<evidence type="ECO:0000256" key="13">
    <source>
        <dbReference type="SAM" id="MobiDB-lite"/>
    </source>
</evidence>
<evidence type="ECO:0000305" key="14"/>
<protein>
    <recommendedName>
        <fullName>Genome polyprotein</fullName>
    </recommendedName>
    <component>
        <recommendedName>
            <fullName>P1 proteinase</fullName>
        </recommendedName>
        <alternativeName>
            <fullName>N-terminal protein</fullName>
            <ecNumber evidence="2">3.4.-.-</ecNumber>
        </alternativeName>
    </component>
    <component>
        <recommendedName>
            <fullName>Helper component proteinase</fullName>
            <shortName>HC-pro</shortName>
            <ecNumber evidence="2">3.4.22.45</ecNumber>
        </recommendedName>
    </component>
    <component>
        <recommendedName>
            <fullName>Protein P3</fullName>
        </recommendedName>
    </component>
    <component>
        <recommendedName>
            <fullName>6 kDa protein 1</fullName>
            <shortName>6K1</shortName>
        </recommendedName>
    </component>
    <component>
        <recommendedName>
            <fullName>Cytoplasmic inclusion protein</fullName>
            <shortName>CI</shortName>
            <ecNumber>3.6.4.-</ecNumber>
        </recommendedName>
    </component>
    <component>
        <recommendedName>
            <fullName>6 kDa protein 2</fullName>
            <shortName>6K2</shortName>
        </recommendedName>
    </component>
    <component>
        <recommendedName>
            <fullName>Viral genome-linked protein</fullName>
        </recommendedName>
        <alternativeName>
            <fullName>VPg</fullName>
        </alternativeName>
    </component>
    <component>
        <recommendedName>
            <fullName>Nuclear inclusion protein A</fullName>
            <shortName>NI-a</shortName>
            <shortName>NIa</shortName>
            <ecNumber>3.4.22.44</ecNumber>
        </recommendedName>
        <alternativeName>
            <fullName>49 kDa proteinase</fullName>
            <shortName>49 kDa-Pro</shortName>
        </alternativeName>
        <alternativeName>
            <fullName>NIa-pro</fullName>
        </alternativeName>
    </component>
    <component>
        <recommendedName>
            <fullName>Nuclear inclusion protein B</fullName>
            <shortName>NI-b</shortName>
            <shortName>NIb</shortName>
            <ecNumber>2.7.7.48</ecNumber>
        </recommendedName>
        <alternativeName>
            <fullName>RNA-directed RNA polymerase</fullName>
        </alternativeName>
    </component>
    <component>
        <recommendedName>
            <fullName>Capsid protein</fullName>
            <shortName>CP</shortName>
        </recommendedName>
        <alternativeName>
            <fullName>Coat protein</fullName>
        </alternativeName>
    </component>
</protein>
<keyword id="KW-0067">ATP-binding</keyword>
<keyword id="KW-0167">Capsid protein</keyword>
<keyword id="KW-0191">Covalent protein-RNA linkage</keyword>
<keyword id="KW-0903">Direct protein sequencing</keyword>
<keyword id="KW-1139">Helical capsid protein</keyword>
<keyword id="KW-0347">Helicase</keyword>
<keyword id="KW-1036">Host cytoplasmic vesicle</keyword>
<keyword id="KW-0945">Host-virus interaction</keyword>
<keyword id="KW-0378">Hydrolase</keyword>
<keyword id="KW-1090">Inhibition of host innate immune response by virus</keyword>
<keyword id="KW-0547">Nucleotide-binding</keyword>
<keyword id="KW-0548">Nucleotidyltransferase</keyword>
<keyword id="KW-0597">Phosphoprotein</keyword>
<keyword id="KW-0645">Protease</keyword>
<keyword id="KW-1185">Reference proteome</keyword>
<keyword id="KW-0696">RNA-directed RNA polymerase</keyword>
<keyword id="KW-0720">Serine protease</keyword>
<keyword id="KW-0941">Suppressor of RNA silencing</keyword>
<keyword id="KW-0788">Thiol protease</keyword>
<keyword id="KW-0808">Transferase</keyword>
<keyword id="KW-0899">Viral immunoevasion</keyword>
<keyword id="KW-0693">Viral RNA replication</keyword>
<keyword id="KW-0946">Virion</keyword>